<dbReference type="EMBL" id="GEUW01000071">
    <property type="protein sequence ID" value="JAW06974.1"/>
    <property type="molecule type" value="mRNA"/>
</dbReference>
<dbReference type="EMBL" id="MT450717">
    <property type="protein sequence ID" value="QPD99053.1"/>
    <property type="molecule type" value="mRNA"/>
</dbReference>
<dbReference type="GO" id="GO:0005576">
    <property type="term" value="C:extracellular region"/>
    <property type="evidence" value="ECO:0007669"/>
    <property type="project" value="UniProtKB-SubCell"/>
</dbReference>
<dbReference type="GO" id="GO:0015459">
    <property type="term" value="F:potassium channel regulator activity"/>
    <property type="evidence" value="ECO:0007669"/>
    <property type="project" value="UniProtKB-KW"/>
</dbReference>
<dbReference type="GO" id="GO:0090729">
    <property type="term" value="F:toxin activity"/>
    <property type="evidence" value="ECO:0007669"/>
    <property type="project" value="UniProtKB-KW"/>
</dbReference>
<evidence type="ECO:0000250" key="1">
    <source>
        <dbReference type="UniProtKB" id="Q5F1N4"/>
    </source>
</evidence>
<evidence type="ECO:0000255" key="2"/>
<evidence type="ECO:0000303" key="3">
    <source>
    </source>
</evidence>
<evidence type="ECO:0000305" key="4"/>
<evidence type="ECO:0000305" key="5">
    <source>
    </source>
</evidence>
<evidence type="ECO:0000305" key="6">
    <source>
    </source>
</evidence>
<evidence type="ECO:0000312" key="7">
    <source>
        <dbReference type="EMBL" id="JAW06974.1"/>
    </source>
</evidence>
<evidence type="ECO:0000312" key="8">
    <source>
        <dbReference type="EMBL" id="QPD99053.1"/>
    </source>
</evidence>
<sequence length="83" mass="9947">MKLDIVLIMFVTFSTTLAQHDEREEWYPFRFGNGHVGCSNRLGMSENDFCRKLCNQDGKWRNSKCKEHYCYCGPQRFYRVIKL</sequence>
<organism>
    <name type="scientific">Tityus serrulatus</name>
    <name type="common">Brazilian scorpion</name>
    <dbReference type="NCBI Taxonomy" id="6887"/>
    <lineage>
        <taxon>Eukaryota</taxon>
        <taxon>Metazoa</taxon>
        <taxon>Ecdysozoa</taxon>
        <taxon>Arthropoda</taxon>
        <taxon>Chelicerata</taxon>
        <taxon>Arachnida</taxon>
        <taxon>Scorpiones</taxon>
        <taxon>Buthida</taxon>
        <taxon>Buthoidea</taxon>
        <taxon>Buthidae</taxon>
        <taxon>Tityus</taxon>
    </lineage>
</organism>
<name>KTX20_TITSE</name>
<protein>
    <recommendedName>
        <fullName evidence="3">Putative potassium channel toxin Ts20</fullName>
    </recommendedName>
    <alternativeName>
        <fullName evidence="3">Putative KTx</fullName>
    </alternativeName>
    <alternativeName>
        <fullName evidence="4">Tityustoxin-20</fullName>
    </alternativeName>
</protein>
<feature type="signal peptide" evidence="2">
    <location>
        <begin position="1"/>
        <end position="18"/>
    </location>
</feature>
<feature type="chain" id="PRO_5013030286" description="Putative potassium channel toxin Ts20">
    <location>
        <begin position="19"/>
        <end position="83"/>
    </location>
</feature>
<comment type="function">
    <text evidence="1">Reversibly inhibits potassium channels.</text>
</comment>
<comment type="subcellular location">
    <subcellularLocation>
        <location evidence="5 6">Secreted</location>
    </subcellularLocation>
</comment>
<comment type="tissue specificity">
    <text evidence="5 6">Expressed by the venom gland.</text>
</comment>
<comment type="PTM">
    <text evidence="4">Contains 3 disulfide bonds.</text>
</comment>
<proteinExistence type="inferred from homology"/>
<keyword id="KW-1015">Disulfide bond</keyword>
<keyword id="KW-0872">Ion channel impairing toxin</keyword>
<keyword id="KW-0528">Neurotoxin</keyword>
<keyword id="KW-0632">Potassium channel impairing toxin</keyword>
<keyword id="KW-0964">Secreted</keyword>
<keyword id="KW-0732">Signal</keyword>
<keyword id="KW-0800">Toxin</keyword>
<keyword id="KW-1220">Voltage-gated potassium channel impairing toxin</keyword>
<accession>A0A218QXE6</accession>
<reference evidence="7" key="1">
    <citation type="journal article" date="2018" name="PLoS ONE">
        <title>Proteomic endorsed transcriptomic profiles of venom glands from Tityus obscurus and T. serrulatus scorpions.</title>
        <authorList>
            <person name="de Oliveira U.C."/>
            <person name="Nishiyama M.Y. Jr."/>
            <person name="Dos Santos M.B.V."/>
            <person name="Santos-da-Silva A.P."/>
            <person name="Chalkidis H.M."/>
            <person name="Souza-Imberg A."/>
            <person name="Candido D.M."/>
            <person name="Yamanouye N."/>
            <person name="Dorce V.A.C."/>
            <person name="Junqueira-de-Azevedo I.L.M."/>
        </authorList>
    </citation>
    <scope>NUCLEOTIDE SEQUENCE [MRNA]</scope>
    <source>
        <tissue>Telson</tissue>
    </source>
</reference>
<reference evidence="8" key="2">
    <citation type="journal article" date="2021" name="Toxicon">
        <title>Novel components of Tityus serrulatus venom: a transcriptomic approach.</title>
        <authorList>
            <person name="Kalapothakis Y."/>
            <person name="Miranda K."/>
            <person name="Pereira A.H."/>
            <person name="Witt A.S.A."/>
            <person name="Marani C."/>
            <person name="Martins A.P."/>
            <person name="Leal H.G."/>
            <person name="Campos-Junior E."/>
            <person name="Pimenta A.M.C."/>
            <person name="Borges A."/>
            <person name="Chavez-Olortegui C."/>
            <person name="Kalapothakis E."/>
        </authorList>
    </citation>
    <scope>NUCLEOTIDE SEQUENCE [MRNA]</scope>
    <source>
        <tissue>Telson</tissue>
    </source>
</reference>